<gene>
    <name type="primary">mntC</name>
    <name type="ordered locus">lin1962</name>
</gene>
<proteinExistence type="inferred from homology"/>
<name>MNTC_LISIN</name>
<feature type="chain" id="PRO_0000171151" description="Manganese transport system membrane protein MntC">
    <location>
        <begin position="1"/>
        <end position="280"/>
    </location>
</feature>
<feature type="transmembrane region" description="Helical" evidence="2">
    <location>
        <begin position="16"/>
        <end position="36"/>
    </location>
</feature>
<feature type="transmembrane region" description="Helical" evidence="2">
    <location>
        <begin position="41"/>
        <end position="61"/>
    </location>
</feature>
<feature type="transmembrane region" description="Helical" evidence="2">
    <location>
        <begin position="62"/>
        <end position="82"/>
    </location>
</feature>
<feature type="transmembrane region" description="Helical" evidence="2">
    <location>
        <begin position="92"/>
        <end position="112"/>
    </location>
</feature>
<feature type="transmembrane region" description="Helical" evidence="2">
    <location>
        <begin position="137"/>
        <end position="157"/>
    </location>
</feature>
<feature type="transmembrane region" description="Helical" evidence="2">
    <location>
        <begin position="168"/>
        <end position="188"/>
    </location>
</feature>
<feature type="transmembrane region" description="Helical" evidence="2">
    <location>
        <begin position="193"/>
        <end position="213"/>
    </location>
</feature>
<feature type="transmembrane region" description="Helical" evidence="2">
    <location>
        <begin position="221"/>
        <end position="241"/>
    </location>
</feature>
<feature type="transmembrane region" description="Helical" evidence="2">
    <location>
        <begin position="244"/>
        <end position="264"/>
    </location>
</feature>
<organism>
    <name type="scientific">Listeria innocua serovar 6a (strain ATCC BAA-680 / CLIP 11262)</name>
    <dbReference type="NCBI Taxonomy" id="272626"/>
    <lineage>
        <taxon>Bacteria</taxon>
        <taxon>Bacillati</taxon>
        <taxon>Bacillota</taxon>
        <taxon>Bacilli</taxon>
        <taxon>Bacillales</taxon>
        <taxon>Listeriaceae</taxon>
        <taxon>Listeria</taxon>
    </lineage>
</organism>
<comment type="function">
    <text evidence="1">This protein is probably a component of a manganese permease, a binding protein-dependent, ATP-driven transport system.</text>
</comment>
<comment type="subcellular location">
    <subcellularLocation>
        <location evidence="3">Cell membrane</location>
        <topology evidence="3">Multi-pass membrane protein</topology>
    </subcellularLocation>
</comment>
<comment type="similarity">
    <text evidence="3">Belongs to the ABC-3 integral membrane protein family.</text>
</comment>
<keyword id="KW-1003">Cell membrane</keyword>
<keyword id="KW-0406">Ion transport</keyword>
<keyword id="KW-0472">Membrane</keyword>
<keyword id="KW-0812">Transmembrane</keyword>
<keyword id="KW-1133">Transmembrane helix</keyword>
<keyword id="KW-0813">Transport</keyword>
<protein>
    <recommendedName>
        <fullName>Manganese transport system membrane protein MntC</fullName>
    </recommendedName>
</protein>
<dbReference type="EMBL" id="AL596170">
    <property type="protein sequence ID" value="CAC97192.1"/>
    <property type="molecule type" value="Genomic_DNA"/>
</dbReference>
<dbReference type="PIR" id="AH1677">
    <property type="entry name" value="AH1677"/>
</dbReference>
<dbReference type="RefSeq" id="WP_003767474.1">
    <property type="nucleotide sequence ID" value="NC_003212.1"/>
</dbReference>
<dbReference type="SMR" id="Q92AG0"/>
<dbReference type="STRING" id="272626.gene:17566320"/>
<dbReference type="KEGG" id="lin:lin1962"/>
<dbReference type="eggNOG" id="COG1108">
    <property type="taxonomic scope" value="Bacteria"/>
</dbReference>
<dbReference type="HOGENOM" id="CLU_028808_4_0_9"/>
<dbReference type="OrthoDB" id="9788905at2"/>
<dbReference type="Proteomes" id="UP000002513">
    <property type="component" value="Chromosome"/>
</dbReference>
<dbReference type="GO" id="GO:0043190">
    <property type="term" value="C:ATP-binding cassette (ABC) transporter complex"/>
    <property type="evidence" value="ECO:0007669"/>
    <property type="project" value="InterPro"/>
</dbReference>
<dbReference type="GO" id="GO:0006811">
    <property type="term" value="P:monoatomic ion transport"/>
    <property type="evidence" value="ECO:0007669"/>
    <property type="project" value="UniProtKB-KW"/>
</dbReference>
<dbReference type="GO" id="GO:0010043">
    <property type="term" value="P:response to zinc ion"/>
    <property type="evidence" value="ECO:0007669"/>
    <property type="project" value="TreeGrafter"/>
</dbReference>
<dbReference type="GO" id="GO:0055085">
    <property type="term" value="P:transmembrane transport"/>
    <property type="evidence" value="ECO:0007669"/>
    <property type="project" value="InterPro"/>
</dbReference>
<dbReference type="CDD" id="cd06550">
    <property type="entry name" value="TM_ABC_iron-siderophores_like"/>
    <property type="match status" value="1"/>
</dbReference>
<dbReference type="FunFam" id="1.10.3470.10:FF:000003">
    <property type="entry name" value="Iron ABC transporter permease SitD"/>
    <property type="match status" value="1"/>
</dbReference>
<dbReference type="Gene3D" id="1.10.3470.10">
    <property type="entry name" value="ABC transporter involved in vitamin B12 uptake, BtuC"/>
    <property type="match status" value="1"/>
</dbReference>
<dbReference type="InterPro" id="IPR037294">
    <property type="entry name" value="ABC_BtuC-like"/>
</dbReference>
<dbReference type="InterPro" id="IPR001626">
    <property type="entry name" value="ABC_TroCD"/>
</dbReference>
<dbReference type="PANTHER" id="PTHR30477">
    <property type="entry name" value="ABC-TRANSPORTER METAL-BINDING PROTEIN"/>
    <property type="match status" value="1"/>
</dbReference>
<dbReference type="PANTHER" id="PTHR30477:SF13">
    <property type="entry name" value="IRON TRANSPORT SYSTEM MEMBRANE PROTEIN HI_0360-RELATED"/>
    <property type="match status" value="1"/>
</dbReference>
<dbReference type="Pfam" id="PF00950">
    <property type="entry name" value="ABC-3"/>
    <property type="match status" value="1"/>
</dbReference>
<dbReference type="SUPFAM" id="SSF81345">
    <property type="entry name" value="ABC transporter involved in vitamin B12 uptake, BtuC"/>
    <property type="match status" value="1"/>
</dbReference>
<evidence type="ECO:0000250" key="1"/>
<evidence type="ECO:0000255" key="2"/>
<evidence type="ECO:0000305" key="3"/>
<accession>Q92AG0</accession>
<sequence>MLFLEGLMQYGFLQKALITSVTVGIVSGVIGSFIILRGMSLMGDAISHAVLPGVAISYMMGMNFFIGAATFGIAAALGIGFVNQKSRIKNDTAIGIVFSAFFALGIILISFAKSSTDLYHILFGNVLAVRSSDMWMTIIIAILVISLVAIFYKEFLVSSFDPVMAEAYGLNVRFLHYFLMLLLTLVTVSALQTVGIILVVAMLITPAATAYLLTNKLSKMIMLASTFGAVSAIIGLYFSYIFNLASGAAMVLVATIIFFIAFLFAPKQGLLFSKKKEVIE</sequence>
<reference key="1">
    <citation type="journal article" date="2001" name="Science">
        <title>Comparative genomics of Listeria species.</title>
        <authorList>
            <person name="Glaser P."/>
            <person name="Frangeul L."/>
            <person name="Buchrieser C."/>
            <person name="Rusniok C."/>
            <person name="Amend A."/>
            <person name="Baquero F."/>
            <person name="Berche P."/>
            <person name="Bloecker H."/>
            <person name="Brandt P."/>
            <person name="Chakraborty T."/>
            <person name="Charbit A."/>
            <person name="Chetouani F."/>
            <person name="Couve E."/>
            <person name="de Daruvar A."/>
            <person name="Dehoux P."/>
            <person name="Domann E."/>
            <person name="Dominguez-Bernal G."/>
            <person name="Duchaud E."/>
            <person name="Durant L."/>
            <person name="Dussurget O."/>
            <person name="Entian K.-D."/>
            <person name="Fsihi H."/>
            <person name="Garcia-del Portillo F."/>
            <person name="Garrido P."/>
            <person name="Gautier L."/>
            <person name="Goebel W."/>
            <person name="Gomez-Lopez N."/>
            <person name="Hain T."/>
            <person name="Hauf J."/>
            <person name="Jackson D."/>
            <person name="Jones L.-M."/>
            <person name="Kaerst U."/>
            <person name="Kreft J."/>
            <person name="Kuhn M."/>
            <person name="Kunst F."/>
            <person name="Kurapkat G."/>
            <person name="Madueno E."/>
            <person name="Maitournam A."/>
            <person name="Mata Vicente J."/>
            <person name="Ng E."/>
            <person name="Nedjari H."/>
            <person name="Nordsiek G."/>
            <person name="Novella S."/>
            <person name="de Pablos B."/>
            <person name="Perez-Diaz J.-C."/>
            <person name="Purcell R."/>
            <person name="Remmel B."/>
            <person name="Rose M."/>
            <person name="Schlueter T."/>
            <person name="Simoes N."/>
            <person name="Tierrez A."/>
            <person name="Vazquez-Boland J.-A."/>
            <person name="Voss H."/>
            <person name="Wehland J."/>
            <person name="Cossart P."/>
        </authorList>
    </citation>
    <scope>NUCLEOTIDE SEQUENCE [LARGE SCALE GENOMIC DNA]</scope>
    <source>
        <strain>ATCC BAA-680 / CLIP 11262</strain>
    </source>
</reference>